<evidence type="ECO:0000255" key="1">
    <source>
        <dbReference type="HAMAP-Rule" id="MF_00033"/>
    </source>
</evidence>
<keyword id="KW-0131">Cell cycle</keyword>
<keyword id="KW-0132">Cell division</keyword>
<keyword id="KW-0997">Cell inner membrane</keyword>
<keyword id="KW-1003">Cell membrane</keyword>
<keyword id="KW-0133">Cell shape</keyword>
<keyword id="KW-0961">Cell wall biogenesis/degradation</keyword>
<keyword id="KW-0328">Glycosyltransferase</keyword>
<keyword id="KW-0472">Membrane</keyword>
<keyword id="KW-0573">Peptidoglycan synthesis</keyword>
<keyword id="KW-1185">Reference proteome</keyword>
<keyword id="KW-0808">Transferase</keyword>
<gene>
    <name evidence="1" type="primary">murG</name>
    <name type="ordered locus">DP2898</name>
</gene>
<sequence>MKETRRKRILLTGGGTGGHLFPAIAAAQQFCREYPGAEVLFVGTKRKMDAETLERYGFKGVAINSYGLKGKNMRELVKALLVLPISCLQALFILARFRPDLVLGVGGYVTGPVVAMAKLCRRPTLIHEQNSVPGLANRKLAKLVDRVCVSLPASASCFPADKVVFTGNPVRENLVALAAKAREVKEGVTLLVLGGSQGARSLNRLIVEAFVGVGSESLAGINLIHQTGTKDLAWVKQAYGDAGRDVWVEPFFKDMDAVYSQADILVSRAGATTLAELATLGKPVILVPYPFAADNHQQKNAEYYVQGGGALLFKESELTAPQLVEAVISIATNREQRERMEFNQRRLAPTDAAGKIVAVCRQLINRDEL</sequence>
<dbReference type="EC" id="2.4.1.227" evidence="1"/>
<dbReference type="EMBL" id="CR522870">
    <property type="protein sequence ID" value="CAG37627.1"/>
    <property type="molecule type" value="Genomic_DNA"/>
</dbReference>
<dbReference type="RefSeq" id="WP_011190139.1">
    <property type="nucleotide sequence ID" value="NC_006138.1"/>
</dbReference>
<dbReference type="SMR" id="Q6AJ53"/>
<dbReference type="STRING" id="177439.DP2898"/>
<dbReference type="CAZy" id="GT28">
    <property type="family name" value="Glycosyltransferase Family 28"/>
</dbReference>
<dbReference type="KEGG" id="dps:DP2898"/>
<dbReference type="eggNOG" id="COG0707">
    <property type="taxonomic scope" value="Bacteria"/>
</dbReference>
<dbReference type="HOGENOM" id="CLU_037404_2_1_7"/>
<dbReference type="OrthoDB" id="9808936at2"/>
<dbReference type="UniPathway" id="UPA00219"/>
<dbReference type="Proteomes" id="UP000000602">
    <property type="component" value="Chromosome"/>
</dbReference>
<dbReference type="GO" id="GO:0005886">
    <property type="term" value="C:plasma membrane"/>
    <property type="evidence" value="ECO:0007669"/>
    <property type="project" value="UniProtKB-SubCell"/>
</dbReference>
<dbReference type="GO" id="GO:0051991">
    <property type="term" value="F:UDP-N-acetyl-D-glucosamine:N-acetylmuramoyl-L-alanyl-D-glutamyl-meso-2,6-diaminopimelyl-D-alanyl-D-alanine-diphosphoundecaprenol 4-beta-N-acetylglucosaminlytransferase activity"/>
    <property type="evidence" value="ECO:0007669"/>
    <property type="project" value="RHEA"/>
</dbReference>
<dbReference type="GO" id="GO:0050511">
    <property type="term" value="F:undecaprenyldiphospho-muramoylpentapeptide beta-N-acetylglucosaminyltransferase activity"/>
    <property type="evidence" value="ECO:0007669"/>
    <property type="project" value="UniProtKB-UniRule"/>
</dbReference>
<dbReference type="GO" id="GO:0005975">
    <property type="term" value="P:carbohydrate metabolic process"/>
    <property type="evidence" value="ECO:0007669"/>
    <property type="project" value="InterPro"/>
</dbReference>
<dbReference type="GO" id="GO:0051301">
    <property type="term" value="P:cell division"/>
    <property type="evidence" value="ECO:0007669"/>
    <property type="project" value="UniProtKB-KW"/>
</dbReference>
<dbReference type="GO" id="GO:0071555">
    <property type="term" value="P:cell wall organization"/>
    <property type="evidence" value="ECO:0007669"/>
    <property type="project" value="UniProtKB-KW"/>
</dbReference>
<dbReference type="GO" id="GO:0030259">
    <property type="term" value="P:lipid glycosylation"/>
    <property type="evidence" value="ECO:0007669"/>
    <property type="project" value="UniProtKB-UniRule"/>
</dbReference>
<dbReference type="GO" id="GO:0009252">
    <property type="term" value="P:peptidoglycan biosynthetic process"/>
    <property type="evidence" value="ECO:0007669"/>
    <property type="project" value="UniProtKB-UniRule"/>
</dbReference>
<dbReference type="GO" id="GO:0008360">
    <property type="term" value="P:regulation of cell shape"/>
    <property type="evidence" value="ECO:0007669"/>
    <property type="project" value="UniProtKB-KW"/>
</dbReference>
<dbReference type="CDD" id="cd03785">
    <property type="entry name" value="GT28_MurG"/>
    <property type="match status" value="1"/>
</dbReference>
<dbReference type="Gene3D" id="3.40.50.2000">
    <property type="entry name" value="Glycogen Phosphorylase B"/>
    <property type="match status" value="2"/>
</dbReference>
<dbReference type="HAMAP" id="MF_00033">
    <property type="entry name" value="MurG"/>
    <property type="match status" value="1"/>
</dbReference>
<dbReference type="InterPro" id="IPR006009">
    <property type="entry name" value="GlcNAc_MurG"/>
</dbReference>
<dbReference type="InterPro" id="IPR007235">
    <property type="entry name" value="Glyco_trans_28_C"/>
</dbReference>
<dbReference type="InterPro" id="IPR004276">
    <property type="entry name" value="GlycoTrans_28_N"/>
</dbReference>
<dbReference type="NCBIfam" id="TIGR01133">
    <property type="entry name" value="murG"/>
    <property type="match status" value="1"/>
</dbReference>
<dbReference type="PANTHER" id="PTHR21015:SF22">
    <property type="entry name" value="GLYCOSYLTRANSFERASE"/>
    <property type="match status" value="1"/>
</dbReference>
<dbReference type="PANTHER" id="PTHR21015">
    <property type="entry name" value="UDP-N-ACETYLGLUCOSAMINE--N-ACETYLMURAMYL-(PENTAPEPTIDE) PYROPHOSPHORYL-UNDECAPRENOL N-ACETYLGLUCOSAMINE TRANSFERASE 1"/>
    <property type="match status" value="1"/>
</dbReference>
<dbReference type="Pfam" id="PF04101">
    <property type="entry name" value="Glyco_tran_28_C"/>
    <property type="match status" value="1"/>
</dbReference>
<dbReference type="Pfam" id="PF03033">
    <property type="entry name" value="Glyco_transf_28"/>
    <property type="match status" value="1"/>
</dbReference>
<dbReference type="SUPFAM" id="SSF53756">
    <property type="entry name" value="UDP-Glycosyltransferase/glycogen phosphorylase"/>
    <property type="match status" value="1"/>
</dbReference>
<organism>
    <name type="scientific">Desulfotalea psychrophila (strain LSv54 / DSM 12343)</name>
    <dbReference type="NCBI Taxonomy" id="177439"/>
    <lineage>
        <taxon>Bacteria</taxon>
        <taxon>Pseudomonadati</taxon>
        <taxon>Thermodesulfobacteriota</taxon>
        <taxon>Desulfobulbia</taxon>
        <taxon>Desulfobulbales</taxon>
        <taxon>Desulfocapsaceae</taxon>
        <taxon>Desulfotalea</taxon>
    </lineage>
</organism>
<proteinExistence type="inferred from homology"/>
<protein>
    <recommendedName>
        <fullName evidence="1">UDP-N-acetylglucosamine--N-acetylmuramyl-(pentapeptide) pyrophosphoryl-undecaprenol N-acetylglucosamine transferase</fullName>
        <ecNumber evidence="1">2.4.1.227</ecNumber>
    </recommendedName>
    <alternativeName>
        <fullName evidence="1">Undecaprenyl-PP-MurNAc-pentapeptide-UDPGlcNAc GlcNAc transferase</fullName>
    </alternativeName>
</protein>
<name>MURG_DESPS</name>
<reference key="1">
    <citation type="journal article" date="2004" name="Environ. Microbiol.">
        <title>The genome of Desulfotalea psychrophila, a sulfate-reducing bacterium from permanently cold Arctic sediments.</title>
        <authorList>
            <person name="Rabus R."/>
            <person name="Ruepp A."/>
            <person name="Frickey T."/>
            <person name="Rattei T."/>
            <person name="Fartmann B."/>
            <person name="Stark M."/>
            <person name="Bauer M."/>
            <person name="Zibat A."/>
            <person name="Lombardot T."/>
            <person name="Becker I."/>
            <person name="Amann J."/>
            <person name="Gellner K."/>
            <person name="Teeling H."/>
            <person name="Leuschner W.D."/>
            <person name="Gloeckner F.-O."/>
            <person name="Lupas A.N."/>
            <person name="Amann R."/>
            <person name="Klenk H.-P."/>
        </authorList>
    </citation>
    <scope>NUCLEOTIDE SEQUENCE [LARGE SCALE GENOMIC DNA]</scope>
    <source>
        <strain>DSM 12343 / LSv54</strain>
    </source>
</reference>
<comment type="function">
    <text evidence="1">Cell wall formation. Catalyzes the transfer of a GlcNAc subunit on undecaprenyl-pyrophosphoryl-MurNAc-pentapeptide (lipid intermediate I) to form undecaprenyl-pyrophosphoryl-MurNAc-(pentapeptide)GlcNAc (lipid intermediate II).</text>
</comment>
<comment type="catalytic activity">
    <reaction evidence="1">
        <text>di-trans,octa-cis-undecaprenyl diphospho-N-acetyl-alpha-D-muramoyl-L-alanyl-D-glutamyl-meso-2,6-diaminopimeloyl-D-alanyl-D-alanine + UDP-N-acetyl-alpha-D-glucosamine = di-trans,octa-cis-undecaprenyl diphospho-[N-acetyl-alpha-D-glucosaminyl-(1-&gt;4)]-N-acetyl-alpha-D-muramoyl-L-alanyl-D-glutamyl-meso-2,6-diaminopimeloyl-D-alanyl-D-alanine + UDP + H(+)</text>
        <dbReference type="Rhea" id="RHEA:31227"/>
        <dbReference type="ChEBI" id="CHEBI:15378"/>
        <dbReference type="ChEBI" id="CHEBI:57705"/>
        <dbReference type="ChEBI" id="CHEBI:58223"/>
        <dbReference type="ChEBI" id="CHEBI:61387"/>
        <dbReference type="ChEBI" id="CHEBI:61388"/>
        <dbReference type="EC" id="2.4.1.227"/>
    </reaction>
</comment>
<comment type="pathway">
    <text evidence="1">Cell wall biogenesis; peptidoglycan biosynthesis.</text>
</comment>
<comment type="subcellular location">
    <subcellularLocation>
        <location evidence="1">Cell inner membrane</location>
        <topology evidence="1">Peripheral membrane protein</topology>
        <orientation evidence="1">Cytoplasmic side</orientation>
    </subcellularLocation>
</comment>
<comment type="similarity">
    <text evidence="1">Belongs to the glycosyltransferase 28 family. MurG subfamily.</text>
</comment>
<accession>Q6AJ53</accession>
<feature type="chain" id="PRO_0000225050" description="UDP-N-acetylglucosamine--N-acetylmuramyl-(pentapeptide) pyrophosphoryl-undecaprenol N-acetylglucosamine transferase">
    <location>
        <begin position="1"/>
        <end position="369"/>
    </location>
</feature>
<feature type="binding site" evidence="1">
    <location>
        <begin position="16"/>
        <end position="18"/>
    </location>
    <ligand>
        <name>UDP-N-acetyl-alpha-D-glucosamine</name>
        <dbReference type="ChEBI" id="CHEBI:57705"/>
    </ligand>
</feature>
<feature type="binding site" evidence="1">
    <location>
        <position position="130"/>
    </location>
    <ligand>
        <name>UDP-N-acetyl-alpha-D-glucosamine</name>
        <dbReference type="ChEBI" id="CHEBI:57705"/>
    </ligand>
</feature>
<feature type="binding site" evidence="1">
    <location>
        <position position="171"/>
    </location>
    <ligand>
        <name>UDP-N-acetyl-alpha-D-glucosamine</name>
        <dbReference type="ChEBI" id="CHEBI:57705"/>
    </ligand>
</feature>
<feature type="binding site" evidence="1">
    <location>
        <position position="196"/>
    </location>
    <ligand>
        <name>UDP-N-acetyl-alpha-D-glucosamine</name>
        <dbReference type="ChEBI" id="CHEBI:57705"/>
    </ligand>
</feature>
<feature type="binding site" evidence="1">
    <location>
        <position position="297"/>
    </location>
    <ligand>
        <name>UDP-N-acetyl-alpha-D-glucosamine</name>
        <dbReference type="ChEBI" id="CHEBI:57705"/>
    </ligand>
</feature>